<gene>
    <name type="primary">Sik1</name>
    <name type="synonym">Kid2</name>
    <name type="synonym">Sik</name>
    <name type="synonym">Snf1lk</name>
</gene>
<feature type="chain" id="PRO_0000086661" description="Serine/threonine-protein kinase SIK1">
    <location>
        <begin position="1"/>
        <end position="776"/>
    </location>
</feature>
<feature type="domain" description="Protein kinase" evidence="4">
    <location>
        <begin position="27"/>
        <end position="278"/>
    </location>
</feature>
<feature type="domain" description="UBA" evidence="5">
    <location>
        <begin position="303"/>
        <end position="343"/>
    </location>
</feature>
<feature type="region of interest" description="Disordered" evidence="7">
    <location>
        <begin position="350"/>
        <end position="371"/>
    </location>
</feature>
<feature type="region of interest" description="Disordered" evidence="7">
    <location>
        <begin position="449"/>
        <end position="472"/>
    </location>
</feature>
<feature type="region of interest" description="RK-rich region" evidence="1">
    <location>
        <begin position="586"/>
        <end position="612"/>
    </location>
</feature>
<feature type="region of interest" description="Disordered" evidence="7">
    <location>
        <begin position="621"/>
        <end position="643"/>
    </location>
</feature>
<feature type="compositionally biased region" description="Polar residues" evidence="7">
    <location>
        <begin position="628"/>
        <end position="643"/>
    </location>
</feature>
<feature type="active site" description="Proton acceptor" evidence="4 6">
    <location>
        <position position="149"/>
    </location>
</feature>
<feature type="binding site" evidence="4">
    <location>
        <begin position="33"/>
        <end position="41"/>
    </location>
    <ligand>
        <name>ATP</name>
        <dbReference type="ChEBI" id="CHEBI:30616"/>
    </ligand>
</feature>
<feature type="binding site" evidence="4">
    <location>
        <position position="56"/>
    </location>
    <ligand>
        <name>ATP</name>
        <dbReference type="ChEBI" id="CHEBI:30616"/>
    </ligand>
</feature>
<feature type="modified residue" description="Phosphothreonine; by LKB1 and GSK3-beta" evidence="2">
    <location>
        <position position="182"/>
    </location>
</feature>
<feature type="modified residue" description="Phosphoserine; by autocatalysis" evidence="2">
    <location>
        <position position="186"/>
    </location>
</feature>
<feature type="modified residue" description="Phosphothreonine; by CaMK1" evidence="10">
    <location>
        <position position="322"/>
    </location>
</feature>
<feature type="modified residue" description="Phosphoserine; by PKA" evidence="3">
    <location>
        <position position="577"/>
    </location>
</feature>
<feature type="mutagenesis site" description="Abolishes ability to regulate sodium/potassium-transporting ATPase activity following increases in intracellular sodium." evidence="10">
    <original>T</original>
    <variation>A</variation>
    <location>
        <position position="322"/>
    </location>
</feature>
<feature type="sequence conflict" description="In Ref. 2; AAF14191." evidence="13" ref="2">
    <original>R</original>
    <variation>K</variation>
    <location>
        <position position="473"/>
    </location>
</feature>
<sequence>MVIMSEFSAVPTGTGQGQQKPLRVGFYDVERTLGKGNFAVVKLARHRVTKTQVAIKIIDKTRLDSSNLEKIYREVQLMKLLNHPNIIKLYQVMETKDMLYIVTEFAKNGEMFDYLTSNGHLSENEARKKFWQILSAVEYCHNHHIVHRDLKTENLLLDGNMDIKLADFGFGNFYKPGEPLSTWCGSPPYAAPEVFEGKEYEGPQLDIWSLGVVLYVLVCGSLPFDGPNLPTLRQRVLEGRFRIPFFMSQDCETLIRRMLVVDPAKRITIAQIRQHRWMQADPTLLQQDDPAFSMQGYTSNLGDYNEQVLGIMQALGIDRQRTVESLQNSSYNHFAAIYYLLLERLREHRSTQPSSRATPAPARQPQLRNSDLSSLEVPQEILPCDPFRPSLLCPQPQALAQSVLQAEIDCDLHSSLQPLFFPLDTNCSGVFRHRSISPSSLLDTAISEEARQGPSLEEEQEVQEPLPGSTGRRHTLAEVSTHFSPLNPPCIIVSSSAAVSPSEGTSSDSCLPFSASEGPAGLGGGLATPGLLGTSSPVRLASPFLGSQSATPVLQSQAGLGATVLPPVSFQEGRRASDTSLTQGLKAFRQQLRKNARTKGFLGLNKIKGLARQVCQSSIRGSRGGMSTFHTPAPSSGLQGCTASSREGRSLLEEVLHQQRLLQLQHHSAVSSDYQQAPQLSPVPYVLTPCDGLLVSGIPLLPTPLLQPGMSPVASAAQLLDAHLHISAGPVALPTGPLPQCLTRLSPSCDPAGLPQGDCEMEDLTSGQRGTFVLVQ</sequence>
<evidence type="ECO:0000250" key="1"/>
<evidence type="ECO:0000250" key="2">
    <source>
        <dbReference type="UniProtKB" id="P57059"/>
    </source>
</evidence>
<evidence type="ECO:0000250" key="3">
    <source>
        <dbReference type="UniProtKB" id="Q60670"/>
    </source>
</evidence>
<evidence type="ECO:0000255" key="4">
    <source>
        <dbReference type="PROSITE-ProRule" id="PRU00159"/>
    </source>
</evidence>
<evidence type="ECO:0000255" key="5">
    <source>
        <dbReference type="PROSITE-ProRule" id="PRU00212"/>
    </source>
</evidence>
<evidence type="ECO:0000255" key="6">
    <source>
        <dbReference type="PROSITE-ProRule" id="PRU10027"/>
    </source>
</evidence>
<evidence type="ECO:0000256" key="7">
    <source>
        <dbReference type="SAM" id="MobiDB-lite"/>
    </source>
</evidence>
<evidence type="ECO:0000269" key="8">
    <source>
    </source>
</evidence>
<evidence type="ECO:0000269" key="9">
    <source>
    </source>
</evidence>
<evidence type="ECO:0000269" key="10">
    <source>
    </source>
</evidence>
<evidence type="ECO:0000269" key="11">
    <source>
    </source>
</evidence>
<evidence type="ECO:0000269" key="12">
    <source>
    </source>
</evidence>
<evidence type="ECO:0000305" key="13"/>
<reference key="1">
    <citation type="journal article" date="1999" name="FEBS Lett.">
        <title>Cloning of a novel kinase (SIK) of the SNF1/AMPK family from high salt diet-treated rat adrenal.</title>
        <authorList>
            <person name="Wang Z."/>
            <person name="Takemori H."/>
            <person name="Halder S.K."/>
            <person name="Nonaka Y."/>
            <person name="Okamoto M."/>
        </authorList>
    </citation>
    <scope>NUCLEOTIDE SEQUENCE [MRNA]</scope>
    <scope>AUTOPHOSPHORYLATION</scope>
    <scope>INDUCTION</scope>
    <source>
        <strain>Sprague-Dawley</strain>
        <tissue>Adrenal gland</tissue>
    </source>
</reference>
<reference key="2">
    <citation type="journal article" date="2000" name="J. Neurochem.">
        <title>The salt-inducible kinase, SIK, is induced by depolarization in brain.</title>
        <authorList>
            <person name="Feldman J.D."/>
            <person name="Vician L."/>
            <person name="Crispino M."/>
            <person name="Hoe W."/>
            <person name="Baudry M."/>
            <person name="Herschman H.R."/>
        </authorList>
    </citation>
    <scope>NUCLEOTIDE SEQUENCE [MRNA]</scope>
    <scope>FUNCTION</scope>
    <scope>INDUCTION</scope>
</reference>
<reference key="3">
    <citation type="journal article" date="2007" name="Proc. Natl. Acad. Sci. U.S.A.">
        <title>SIK1 is part of a cell sodium-sensing network that regulates active sodium transport through a calcium-dependent process.</title>
        <authorList>
            <person name="Sjostrom M."/>
            <person name="Stenstrom K."/>
            <person name="Eneling K."/>
            <person name="Zwiller J."/>
            <person name="Katz A.I."/>
            <person name="Takemori H."/>
            <person name="Bertorello A.M."/>
        </authorList>
    </citation>
    <scope>FUNCTION IN PHOSPHORYLATION OF PPME1</scope>
    <scope>CATALYTIC ACTIVITY</scope>
    <scope>PHOSPHORYLATION AT THR-322</scope>
    <scope>MUTAGENESIS OF THR-322</scope>
    <scope>INTERACTION WITH ATP1A1</scope>
</reference>
<reference key="4">
    <citation type="journal article" date="2009" name="Endocr. J.">
        <title>Inactivation of HDAC5 by SIK1 in AICAR-treated C2C12 myoblasts.</title>
        <authorList>
            <person name="Takemori H."/>
            <person name="Katoh Hashimoto Y."/>
            <person name="Nakae J."/>
            <person name="Olson E.N."/>
            <person name="Okamoto M."/>
        </authorList>
    </citation>
    <scope>FUNCTION</scope>
</reference>
<reference key="5">
    <citation type="journal article" date="2009" name="J. Neurosci.">
        <title>TORC1 regulates activity-dependent CREB-target gene transcription and dendritic growth of developing cortical neurons.</title>
        <authorList>
            <person name="Li S."/>
            <person name="Zhang C."/>
            <person name="Takemori H."/>
            <person name="Zhou Y."/>
            <person name="Xiong Z.Q."/>
        </authorList>
    </citation>
    <scope>FUNCTION IN PHOSPHORYLATION OF CRTC1</scope>
    <scope>SUBCELLULAR LOCATION</scope>
</reference>
<dbReference type="EC" id="2.7.11.1" evidence="10"/>
<dbReference type="EMBL" id="AB020480">
    <property type="protein sequence ID" value="BAA82673.1"/>
    <property type="molecule type" value="mRNA"/>
</dbReference>
<dbReference type="EMBL" id="AF106937">
    <property type="protein sequence ID" value="AAF14191.1"/>
    <property type="molecule type" value="mRNA"/>
</dbReference>
<dbReference type="RefSeq" id="NP_067725.2">
    <property type="nucleotide sequence ID" value="NM_021693.3"/>
</dbReference>
<dbReference type="RefSeq" id="XP_038954976.1">
    <property type="nucleotide sequence ID" value="XM_039099048.2"/>
</dbReference>
<dbReference type="SMR" id="Q9R1U5"/>
<dbReference type="DIP" id="DIP-46210N"/>
<dbReference type="FunCoup" id="Q9R1U5">
    <property type="interactions" value="704"/>
</dbReference>
<dbReference type="IntAct" id="Q9R1U5">
    <property type="interactions" value="1"/>
</dbReference>
<dbReference type="STRING" id="10116.ENSRNOP00000001579"/>
<dbReference type="GlyGen" id="Q9R1U5">
    <property type="glycosylation" value="2 sites"/>
</dbReference>
<dbReference type="iPTMnet" id="Q9R1U5"/>
<dbReference type="PhosphoSitePlus" id="Q9R1U5"/>
<dbReference type="PaxDb" id="10116-ENSRNOP00000001579"/>
<dbReference type="Ensembl" id="ENSRNOT00000001579.7">
    <property type="protein sequence ID" value="ENSRNOP00000001579.3"/>
    <property type="gene ID" value="ENSRNOG00000001189.7"/>
</dbReference>
<dbReference type="GeneID" id="59329"/>
<dbReference type="KEGG" id="rno:59329"/>
<dbReference type="UCSC" id="RGD:69407">
    <property type="organism name" value="rat"/>
</dbReference>
<dbReference type="AGR" id="RGD:69407"/>
<dbReference type="CTD" id="150094"/>
<dbReference type="RGD" id="69407">
    <property type="gene designation" value="Sik1"/>
</dbReference>
<dbReference type="eggNOG" id="KOG0586">
    <property type="taxonomic scope" value="Eukaryota"/>
</dbReference>
<dbReference type="GeneTree" id="ENSGT00940000154989"/>
<dbReference type="HOGENOM" id="CLU_000288_87_2_1"/>
<dbReference type="InParanoid" id="Q9R1U5"/>
<dbReference type="OrthoDB" id="63831at9989"/>
<dbReference type="PhylomeDB" id="Q9R1U5"/>
<dbReference type="TreeFam" id="TF315213"/>
<dbReference type="PRO" id="PR:Q9R1U5"/>
<dbReference type="Proteomes" id="UP000002494">
    <property type="component" value="Chromosome 20"/>
</dbReference>
<dbReference type="Bgee" id="ENSRNOG00000001189">
    <property type="expression patterns" value="Expressed in lung and 18 other cell types or tissues"/>
</dbReference>
<dbReference type="GO" id="GO:0005737">
    <property type="term" value="C:cytoplasm"/>
    <property type="evidence" value="ECO:0000250"/>
    <property type="project" value="UniProtKB"/>
</dbReference>
<dbReference type="GO" id="GO:0005634">
    <property type="term" value="C:nucleus"/>
    <property type="evidence" value="ECO:0000250"/>
    <property type="project" value="UniProtKB"/>
</dbReference>
<dbReference type="GO" id="GO:0071889">
    <property type="term" value="F:14-3-3 protein binding"/>
    <property type="evidence" value="ECO:0000250"/>
    <property type="project" value="UniProtKB"/>
</dbReference>
<dbReference type="GO" id="GO:0005524">
    <property type="term" value="F:ATP binding"/>
    <property type="evidence" value="ECO:0000250"/>
    <property type="project" value="UniProtKB"/>
</dbReference>
<dbReference type="GO" id="GO:0008140">
    <property type="term" value="F:cAMP response element binding protein binding"/>
    <property type="evidence" value="ECO:0000250"/>
    <property type="project" value="UniProtKB"/>
</dbReference>
<dbReference type="GO" id="GO:0042826">
    <property type="term" value="F:histone deacetylase binding"/>
    <property type="evidence" value="ECO:0000266"/>
    <property type="project" value="RGD"/>
</dbReference>
<dbReference type="GO" id="GO:0000287">
    <property type="term" value="F:magnesium ion binding"/>
    <property type="evidence" value="ECO:0000250"/>
    <property type="project" value="UniProtKB"/>
</dbReference>
<dbReference type="GO" id="GO:0019901">
    <property type="term" value="F:protein kinase binding"/>
    <property type="evidence" value="ECO:0000353"/>
    <property type="project" value="UniProtKB"/>
</dbReference>
<dbReference type="GO" id="GO:0106310">
    <property type="term" value="F:protein serine kinase activity"/>
    <property type="evidence" value="ECO:0007669"/>
    <property type="project" value="RHEA"/>
</dbReference>
<dbReference type="GO" id="GO:0004674">
    <property type="term" value="F:protein serine/threonine kinase activity"/>
    <property type="evidence" value="ECO:0000314"/>
    <property type="project" value="UniProtKB"/>
</dbReference>
<dbReference type="GO" id="GO:0043276">
    <property type="term" value="P:anoikis"/>
    <property type="evidence" value="ECO:0000266"/>
    <property type="project" value="RGD"/>
</dbReference>
<dbReference type="GO" id="GO:0055007">
    <property type="term" value="P:cardiac muscle cell differentiation"/>
    <property type="evidence" value="ECO:0000250"/>
    <property type="project" value="UniProtKB"/>
</dbReference>
<dbReference type="GO" id="GO:0043153">
    <property type="term" value="P:entrainment of circadian clock by photoperiod"/>
    <property type="evidence" value="ECO:0000250"/>
    <property type="project" value="UniProtKB"/>
</dbReference>
<dbReference type="GO" id="GO:0035556">
    <property type="term" value="P:intracellular signal transduction"/>
    <property type="evidence" value="ECO:0000250"/>
    <property type="project" value="UniProtKB"/>
</dbReference>
<dbReference type="GO" id="GO:0032792">
    <property type="term" value="P:negative regulation of CREB transcription factor activity"/>
    <property type="evidence" value="ECO:0000250"/>
    <property type="project" value="UniProtKB"/>
</dbReference>
<dbReference type="GO" id="GO:0045721">
    <property type="term" value="P:negative regulation of gluconeogenesis"/>
    <property type="evidence" value="ECO:0000250"/>
    <property type="project" value="UniProtKB"/>
</dbReference>
<dbReference type="GO" id="GO:0000122">
    <property type="term" value="P:negative regulation of transcription by RNA polymerase II"/>
    <property type="evidence" value="ECO:0000315"/>
    <property type="project" value="RGD"/>
</dbReference>
<dbReference type="GO" id="GO:0010868">
    <property type="term" value="P:negative regulation of triglyceride biosynthetic process"/>
    <property type="evidence" value="ECO:0000250"/>
    <property type="project" value="UniProtKB"/>
</dbReference>
<dbReference type="GO" id="GO:2000210">
    <property type="term" value="P:positive regulation of anoikis"/>
    <property type="evidence" value="ECO:0000266"/>
    <property type="project" value="RGD"/>
</dbReference>
<dbReference type="GO" id="GO:0046777">
    <property type="term" value="P:protein autophosphorylation"/>
    <property type="evidence" value="ECO:0000250"/>
    <property type="project" value="UniProtKB"/>
</dbReference>
<dbReference type="GO" id="GO:0006468">
    <property type="term" value="P:protein phosphorylation"/>
    <property type="evidence" value="ECO:0000250"/>
    <property type="project" value="UniProtKB"/>
</dbReference>
<dbReference type="GO" id="GO:0045595">
    <property type="term" value="P:regulation of cell differentiation"/>
    <property type="evidence" value="ECO:0000250"/>
    <property type="project" value="UniProtKB"/>
</dbReference>
<dbReference type="GO" id="GO:0007346">
    <property type="term" value="P:regulation of mitotic cell cycle"/>
    <property type="evidence" value="ECO:0000250"/>
    <property type="project" value="UniProtKB"/>
</dbReference>
<dbReference type="GO" id="GO:0010830">
    <property type="term" value="P:regulation of myotube differentiation"/>
    <property type="evidence" value="ECO:0000250"/>
    <property type="project" value="UniProtKB"/>
</dbReference>
<dbReference type="GO" id="GO:0002028">
    <property type="term" value="P:regulation of sodium ion transport"/>
    <property type="evidence" value="ECO:0000314"/>
    <property type="project" value="UniProtKB"/>
</dbReference>
<dbReference type="GO" id="GO:0048511">
    <property type="term" value="P:rhythmic process"/>
    <property type="evidence" value="ECO:0007669"/>
    <property type="project" value="UniProtKB-KW"/>
</dbReference>
<dbReference type="CDD" id="cd14071">
    <property type="entry name" value="STKc_SIK"/>
    <property type="match status" value="1"/>
</dbReference>
<dbReference type="CDD" id="cd14408">
    <property type="entry name" value="UBA_SIK1"/>
    <property type="match status" value="1"/>
</dbReference>
<dbReference type="FunFam" id="3.30.200.20:FF:000003">
    <property type="entry name" value="Non-specific serine/threonine protein kinase"/>
    <property type="match status" value="1"/>
</dbReference>
<dbReference type="FunFam" id="1.10.510.10:FF:000154">
    <property type="entry name" value="Serine/threonine-protein kinase SIK2"/>
    <property type="match status" value="1"/>
</dbReference>
<dbReference type="Gene3D" id="1.10.510.10">
    <property type="entry name" value="Transferase(Phosphotransferase) domain 1"/>
    <property type="match status" value="1"/>
</dbReference>
<dbReference type="InterPro" id="IPR011009">
    <property type="entry name" value="Kinase-like_dom_sf"/>
</dbReference>
<dbReference type="InterPro" id="IPR000719">
    <property type="entry name" value="Prot_kinase_dom"/>
</dbReference>
<dbReference type="InterPro" id="IPR017441">
    <property type="entry name" value="Protein_kinase_ATP_BS"/>
</dbReference>
<dbReference type="InterPro" id="IPR008271">
    <property type="entry name" value="Ser/Thr_kinase_AS"/>
</dbReference>
<dbReference type="InterPro" id="IPR017090">
    <property type="entry name" value="Ser/Thr_kinase_SIK1/2"/>
</dbReference>
<dbReference type="InterPro" id="IPR034672">
    <property type="entry name" value="SIK"/>
</dbReference>
<dbReference type="InterPro" id="IPR015940">
    <property type="entry name" value="UBA"/>
</dbReference>
<dbReference type="PANTHER" id="PTHR24346">
    <property type="entry name" value="MAP/MICROTUBULE AFFINITY-REGULATING KINASE"/>
    <property type="match status" value="1"/>
</dbReference>
<dbReference type="PANTHER" id="PTHR24346:SF47">
    <property type="entry name" value="SERINE_THREONINE-PROTEIN KINASE SIK2-RELATED"/>
    <property type="match status" value="1"/>
</dbReference>
<dbReference type="Pfam" id="PF00069">
    <property type="entry name" value="Pkinase"/>
    <property type="match status" value="1"/>
</dbReference>
<dbReference type="Pfam" id="PF23312">
    <property type="entry name" value="UBA_SIK3"/>
    <property type="match status" value="1"/>
</dbReference>
<dbReference type="PIRSF" id="PIRSF037014">
    <property type="entry name" value="Ser/Thr_PK_SNF1-like"/>
    <property type="match status" value="1"/>
</dbReference>
<dbReference type="SMART" id="SM00220">
    <property type="entry name" value="S_TKc"/>
    <property type="match status" value="1"/>
</dbReference>
<dbReference type="SUPFAM" id="SSF56112">
    <property type="entry name" value="Protein kinase-like (PK-like)"/>
    <property type="match status" value="1"/>
</dbReference>
<dbReference type="PROSITE" id="PS00107">
    <property type="entry name" value="PROTEIN_KINASE_ATP"/>
    <property type="match status" value="1"/>
</dbReference>
<dbReference type="PROSITE" id="PS50011">
    <property type="entry name" value="PROTEIN_KINASE_DOM"/>
    <property type="match status" value="1"/>
</dbReference>
<dbReference type="PROSITE" id="PS00108">
    <property type="entry name" value="PROTEIN_KINASE_ST"/>
    <property type="match status" value="1"/>
</dbReference>
<dbReference type="PROSITE" id="PS50030">
    <property type="entry name" value="UBA"/>
    <property type="match status" value="1"/>
</dbReference>
<organism>
    <name type="scientific">Rattus norvegicus</name>
    <name type="common">Rat</name>
    <dbReference type="NCBI Taxonomy" id="10116"/>
    <lineage>
        <taxon>Eukaryota</taxon>
        <taxon>Metazoa</taxon>
        <taxon>Chordata</taxon>
        <taxon>Craniata</taxon>
        <taxon>Vertebrata</taxon>
        <taxon>Euteleostomi</taxon>
        <taxon>Mammalia</taxon>
        <taxon>Eutheria</taxon>
        <taxon>Euarchontoglires</taxon>
        <taxon>Glires</taxon>
        <taxon>Rodentia</taxon>
        <taxon>Myomorpha</taxon>
        <taxon>Muroidea</taxon>
        <taxon>Muridae</taxon>
        <taxon>Murinae</taxon>
        <taxon>Rattus</taxon>
    </lineage>
</organism>
<name>SIK1_RAT</name>
<comment type="function">
    <text evidence="3 9 10 11 12">Serine/threonine-protein kinase involved in various processes such as cell cycle regulation, gluconeogenesis and lipogenesis regulation, muscle growth and differentiation and tumor suppression. Phosphorylates HDAC4, HDAC5, PPME1, SREBF1, CRTC1/TORC1 and CRTC2/TORC2. Acts as a tumor suppressor and plays a key role in p53/TP53-dependent anoikis, a type of apoptosis triggered by cell detachment: required for phosphorylation of p53/TP53 in response to loss of adhesion and is able to suppress metastasis. Part of a sodium-sensing signaling network, probably by mediating phosphorylation of PPME1: following increases in intracellular sodium, SIK1 is activated by CaMK1 and phosphorylates PPME1 subunit of protein phosphatase 2A (PP2A), leading to dephosphorylation of sodium/potassium-transporting ATPase ATP1A1 and subsequent increase activity of ATP1A1. Acts as a regulator of muscle cells by phosphorylating and inhibiting class II histone deacetylases HDAC4 and HDAC5, leading to promote expression of MEF2 target genes in myocytes. Also required during cardiomyogenesis by regulating the exit of cardiomyoblasts from the cell cycle via down-regulation of CDKN1C/p57Kip2. Acts as a regulator of hepatic gluconeogenesis by phosphorylating and repressing the CREB-specific coactivators CRTC1/TORC1 and CRTC2/TORC2, leading to inhibit CREB activity. Also regulates hepatic lipogenesis by phosphorylating and inhibiting SREBF1. In concert with CRTC1/TORC1, regulates the light-induced entrainment of the circadian clock by attenuating PER1 induction; represses CREB-mediated transcription of PER1 by phosphorylating and deactivating CRTC1/TORC1 (By similarity).</text>
</comment>
<comment type="catalytic activity">
    <reaction evidence="10">
        <text>L-seryl-[protein] + ATP = O-phospho-L-seryl-[protein] + ADP + H(+)</text>
        <dbReference type="Rhea" id="RHEA:17989"/>
        <dbReference type="Rhea" id="RHEA-COMP:9863"/>
        <dbReference type="Rhea" id="RHEA-COMP:11604"/>
        <dbReference type="ChEBI" id="CHEBI:15378"/>
        <dbReference type="ChEBI" id="CHEBI:29999"/>
        <dbReference type="ChEBI" id="CHEBI:30616"/>
        <dbReference type="ChEBI" id="CHEBI:83421"/>
        <dbReference type="ChEBI" id="CHEBI:456216"/>
        <dbReference type="EC" id="2.7.11.1"/>
    </reaction>
</comment>
<comment type="catalytic activity">
    <reaction evidence="10">
        <text>L-threonyl-[protein] + ATP = O-phospho-L-threonyl-[protein] + ADP + H(+)</text>
        <dbReference type="Rhea" id="RHEA:46608"/>
        <dbReference type="Rhea" id="RHEA-COMP:11060"/>
        <dbReference type="Rhea" id="RHEA-COMP:11605"/>
        <dbReference type="ChEBI" id="CHEBI:15378"/>
        <dbReference type="ChEBI" id="CHEBI:30013"/>
        <dbReference type="ChEBI" id="CHEBI:30616"/>
        <dbReference type="ChEBI" id="CHEBI:61977"/>
        <dbReference type="ChEBI" id="CHEBI:456216"/>
        <dbReference type="EC" id="2.7.11.1"/>
    </reaction>
</comment>
<comment type="cofactor">
    <cofactor evidence="1">
        <name>Mg(2+)</name>
        <dbReference type="ChEBI" id="CHEBI:18420"/>
    </cofactor>
</comment>
<comment type="activity regulation">
    <text evidence="1">Activated by phosphorylation on Thr-182 (By similarity). Also activated by phosphorylation on Thr-322 in response to increases in intracellular sodium in parallel with elevations in intracellular calcium through the reversible sodium/calcium exchanger.</text>
</comment>
<comment type="subunit">
    <text evidence="1 10">Interacts (when phosphorylated on Thr-182 and Ser-186) with YWHAZ (By similarity). Interacts with ATP1A1.</text>
</comment>
<comment type="subcellular location">
    <subcellularLocation>
        <location evidence="12">Cytoplasm</location>
    </subcellularLocation>
    <subcellularLocation>
        <location evidence="12">Nucleus</location>
    </subcellularLocation>
    <text>Following ACTH (adrenocorticotropic hormone) treatment and subsequent phosphorylation by PKA, translocates to the cytoplasm, where it binds to YWHAZ.</text>
</comment>
<comment type="induction">
    <text evidence="8 9">By high salt diet and depolarization in brain.</text>
</comment>
<comment type="domain">
    <text evidence="1">The RK-rich region determines the subcellular location.</text>
</comment>
<comment type="PTM">
    <text evidence="1 10">Phosphorylated at Thr-182 by STK11/LKB1 in complex with STE20-related adapter-alpha (STRADA) pseudo kinase and CAB39, leading to its activation. Phosphorylation at Thr-182 promotes autophosphorylation at Ser-186, which is required for sustained activity. Autophosphorylation at Ser-186 is maintained by sequential phosphorylation at Thr-182 by GSK3-beta. GSK3-beta cannot initiate phosphorylation at Thr-182, it can only maintain it. Phosphorylation at Ser-577 by PKA promotes translocation to the cytoplasm (By similarity). Phosphorylation at Thr-322 by CaMK1 following intracellular sodium concentration leads to activation.</text>
</comment>
<comment type="similarity">
    <text evidence="13">Belongs to the protein kinase superfamily. CAMK Ser/Thr protein kinase family. AMPK subfamily.</text>
</comment>
<proteinExistence type="evidence at protein level"/>
<keyword id="KW-0067">ATP-binding</keyword>
<keyword id="KW-0090">Biological rhythms</keyword>
<keyword id="KW-0131">Cell cycle</keyword>
<keyword id="KW-0963">Cytoplasm</keyword>
<keyword id="KW-0217">Developmental protein</keyword>
<keyword id="KW-0221">Differentiation</keyword>
<keyword id="KW-0418">Kinase</keyword>
<keyword id="KW-0460">Magnesium</keyword>
<keyword id="KW-0479">Metal-binding</keyword>
<keyword id="KW-0547">Nucleotide-binding</keyword>
<keyword id="KW-0539">Nucleus</keyword>
<keyword id="KW-0597">Phosphoprotein</keyword>
<keyword id="KW-1185">Reference proteome</keyword>
<keyword id="KW-0723">Serine/threonine-protein kinase</keyword>
<keyword id="KW-0808">Transferase</keyword>
<keyword id="KW-0043">Tumor suppressor</keyword>
<protein>
    <recommendedName>
        <fullName>Serine/threonine-protein kinase SIK1</fullName>
        <ecNumber evidence="10">2.7.11.1</ecNumber>
    </recommendedName>
    <alternativeName>
        <fullName>Protein kinase KID2</fullName>
    </alternativeName>
    <alternativeName>
        <fullName>Salt-inducible kinase 1</fullName>
        <shortName>SIK-1</shortName>
    </alternativeName>
    <alternativeName>
        <fullName>Serine/threonine-protein kinase SNF1-like kinase 1</fullName>
        <shortName>Serine/threonine-protein kinase SNF1LK</shortName>
    </alternativeName>
</protein>
<accession>Q9R1U5</accession>
<accession>Q9R081</accession>